<name>COPB_STAAT</name>
<proteinExistence type="inferred from homology"/>
<evidence type="ECO:0000250" key="1"/>
<evidence type="ECO:0000255" key="2"/>
<evidence type="ECO:0000256" key="3">
    <source>
        <dbReference type="SAM" id="MobiDB-lite"/>
    </source>
</evidence>
<evidence type="ECO:0000305" key="4"/>
<protein>
    <recommendedName>
        <fullName>Probable copper-transporting P-type ATPase B</fullName>
        <ecNumber>7.2.2.8</ecNumber>
    </recommendedName>
</protein>
<reference key="1">
    <citation type="journal article" date="2007" name="BMC Microbiol.">
        <title>Subtle genetic changes enhance virulence of methicillin resistant and sensitive Staphylococcus aureus.</title>
        <authorList>
            <person name="Highlander S.K."/>
            <person name="Hulten K.G."/>
            <person name="Qin X."/>
            <person name="Jiang H."/>
            <person name="Yerrapragada S."/>
            <person name="Mason E.O. Jr."/>
            <person name="Shang Y."/>
            <person name="Williams T.M."/>
            <person name="Fortunov R.M."/>
            <person name="Liu Y."/>
            <person name="Igboeli O."/>
            <person name="Petrosino J."/>
            <person name="Tirumalai M."/>
            <person name="Uzman A."/>
            <person name="Fox G.E."/>
            <person name="Cardenas A.M."/>
            <person name="Muzny D.M."/>
            <person name="Hemphill L."/>
            <person name="Ding Y."/>
            <person name="Dugan S."/>
            <person name="Blyth P.R."/>
            <person name="Buhay C.J."/>
            <person name="Dinh H.H."/>
            <person name="Hawes A.C."/>
            <person name="Holder M."/>
            <person name="Kovar C.L."/>
            <person name="Lee S.L."/>
            <person name="Liu W."/>
            <person name="Nazareth L.V."/>
            <person name="Wang Q."/>
            <person name="Zhou J."/>
            <person name="Kaplan S.L."/>
            <person name="Weinstock G.M."/>
        </authorList>
    </citation>
    <scope>NUCLEOTIDE SEQUENCE [LARGE SCALE GENOMIC DNA]</scope>
    <source>
        <strain>USA300 / TCH1516</strain>
    </source>
</reference>
<sequence length="674" mass="73167">MNHSNQMHHDNHASHDHHSGHAHHHGNFKVKFFVSLIFAIPIILLSPLMGVNLPFQFTFPGSEWVVLILSTILFFYGGKPFLSGGKDEIATKKPGMMTLVALGISVAYIYSLYAFYMNNFSSATGHTMDFFWELATLILIMLLGHWIEMNAVGNAGDALKKMAELLPNSAIKVMDNGQREEVKISDIMTDDIVEVKAGESIPTDGIIVQGQTSIDESLVTGESKKVQKNQNDNVIGGSINGSGTIQVKVTAVGEDGYLSQVMGLVNQAQNDKSSAELLSDKVAGYLFYFAVSVGVISFIVWMLIQNDVDFALERLVTVLVIACPHALGLAIPLVTARSTSIGAHNGLIIKNRESVEIAQHIDYVMMDKTGTLTEGNFSVNHYESFKNDLSNDTILSLFASLESQSNHPLAISIVDFAKSKNVSFTNPQDVNNIPGVGLEGLIDNKTYKITNVSYLDKHKLNYDDDLFTKLAQQGNSISYLIEDQQVIGMIAQGDQIKESSKQMVADLLSRNITPVMLTGDNNEVAHAVAKELGISDVHAQLMPEDKESIIKDYQSDGNKVMMVGDGINDAPSLIRADIGIAIGAGTDVAVDSGDIILVKSNPSDIIHFLTLSNNTMRKMVQNLWWGAGYNIVAVPLAAGILAFIGLILSPAIGAILMSLSTIIVAINAFTLKLK</sequence>
<dbReference type="EC" id="7.2.2.8"/>
<dbReference type="EMBL" id="CP000730">
    <property type="protein sequence ID" value="ABX28125.1"/>
    <property type="molecule type" value="Genomic_DNA"/>
</dbReference>
<dbReference type="SMR" id="A8YZ02"/>
<dbReference type="KEGG" id="sax:USA300HOU_0084"/>
<dbReference type="HOGENOM" id="CLU_001771_11_2_9"/>
<dbReference type="GO" id="GO:0005886">
    <property type="term" value="C:plasma membrane"/>
    <property type="evidence" value="ECO:0007669"/>
    <property type="project" value="UniProtKB-SubCell"/>
</dbReference>
<dbReference type="GO" id="GO:0005524">
    <property type="term" value="F:ATP binding"/>
    <property type="evidence" value="ECO:0007669"/>
    <property type="project" value="UniProtKB-KW"/>
</dbReference>
<dbReference type="GO" id="GO:0016887">
    <property type="term" value="F:ATP hydrolysis activity"/>
    <property type="evidence" value="ECO:0007669"/>
    <property type="project" value="InterPro"/>
</dbReference>
<dbReference type="GO" id="GO:0005507">
    <property type="term" value="F:copper ion binding"/>
    <property type="evidence" value="ECO:0007669"/>
    <property type="project" value="TreeGrafter"/>
</dbReference>
<dbReference type="GO" id="GO:0043682">
    <property type="term" value="F:P-type divalent copper transporter activity"/>
    <property type="evidence" value="ECO:0007669"/>
    <property type="project" value="TreeGrafter"/>
</dbReference>
<dbReference type="GO" id="GO:0140581">
    <property type="term" value="F:P-type monovalent copper transporter activity"/>
    <property type="evidence" value="ECO:0007669"/>
    <property type="project" value="UniProtKB-EC"/>
</dbReference>
<dbReference type="GO" id="GO:0055070">
    <property type="term" value="P:copper ion homeostasis"/>
    <property type="evidence" value="ECO:0007669"/>
    <property type="project" value="TreeGrafter"/>
</dbReference>
<dbReference type="CDD" id="cd07552">
    <property type="entry name" value="P-type_ATPase_Cu-like"/>
    <property type="match status" value="1"/>
</dbReference>
<dbReference type="FunFam" id="2.70.150.10:FF:000002">
    <property type="entry name" value="Copper-transporting ATPase 1, putative"/>
    <property type="match status" value="1"/>
</dbReference>
<dbReference type="Gene3D" id="3.40.1110.10">
    <property type="entry name" value="Calcium-transporting ATPase, cytoplasmic domain N"/>
    <property type="match status" value="1"/>
</dbReference>
<dbReference type="Gene3D" id="2.70.150.10">
    <property type="entry name" value="Calcium-transporting ATPase, cytoplasmic transduction domain A"/>
    <property type="match status" value="1"/>
</dbReference>
<dbReference type="Gene3D" id="3.40.50.1000">
    <property type="entry name" value="HAD superfamily/HAD-like"/>
    <property type="match status" value="1"/>
</dbReference>
<dbReference type="InterPro" id="IPR023299">
    <property type="entry name" value="ATPase_P-typ_cyto_dom_N"/>
</dbReference>
<dbReference type="InterPro" id="IPR018303">
    <property type="entry name" value="ATPase_P-typ_P_site"/>
</dbReference>
<dbReference type="InterPro" id="IPR023298">
    <property type="entry name" value="ATPase_P-typ_TM_dom_sf"/>
</dbReference>
<dbReference type="InterPro" id="IPR008250">
    <property type="entry name" value="ATPase_P-typ_transduc_dom_A_sf"/>
</dbReference>
<dbReference type="InterPro" id="IPR036412">
    <property type="entry name" value="HAD-like_sf"/>
</dbReference>
<dbReference type="InterPro" id="IPR023214">
    <property type="entry name" value="HAD_sf"/>
</dbReference>
<dbReference type="InterPro" id="IPR027256">
    <property type="entry name" value="P-typ_ATPase_IB"/>
</dbReference>
<dbReference type="InterPro" id="IPR001757">
    <property type="entry name" value="P_typ_ATPase"/>
</dbReference>
<dbReference type="InterPro" id="IPR044492">
    <property type="entry name" value="P_typ_ATPase_HD_dom"/>
</dbReference>
<dbReference type="NCBIfam" id="TIGR01511">
    <property type="entry name" value="ATPase-IB1_Cu"/>
    <property type="match status" value="1"/>
</dbReference>
<dbReference type="NCBIfam" id="TIGR01525">
    <property type="entry name" value="ATPase-IB_hvy"/>
    <property type="match status" value="1"/>
</dbReference>
<dbReference type="NCBIfam" id="TIGR01494">
    <property type="entry name" value="ATPase_P-type"/>
    <property type="match status" value="1"/>
</dbReference>
<dbReference type="PANTHER" id="PTHR43520">
    <property type="entry name" value="ATP7, ISOFORM B"/>
    <property type="match status" value="1"/>
</dbReference>
<dbReference type="PANTHER" id="PTHR43520:SF5">
    <property type="entry name" value="CATION-TRANSPORTING P-TYPE ATPASE-RELATED"/>
    <property type="match status" value="1"/>
</dbReference>
<dbReference type="Pfam" id="PF00122">
    <property type="entry name" value="E1-E2_ATPase"/>
    <property type="match status" value="1"/>
</dbReference>
<dbReference type="Pfam" id="PF00702">
    <property type="entry name" value="Hydrolase"/>
    <property type="match status" value="1"/>
</dbReference>
<dbReference type="PRINTS" id="PR00119">
    <property type="entry name" value="CATATPASE"/>
</dbReference>
<dbReference type="PRINTS" id="PR00120">
    <property type="entry name" value="HATPASE"/>
</dbReference>
<dbReference type="SFLD" id="SFLDG00002">
    <property type="entry name" value="C1.7:_P-type_atpase_like"/>
    <property type="match status" value="1"/>
</dbReference>
<dbReference type="SFLD" id="SFLDF00027">
    <property type="entry name" value="p-type_atpase"/>
    <property type="match status" value="1"/>
</dbReference>
<dbReference type="SUPFAM" id="SSF81653">
    <property type="entry name" value="Calcium ATPase, transduction domain A"/>
    <property type="match status" value="1"/>
</dbReference>
<dbReference type="SUPFAM" id="SSF81665">
    <property type="entry name" value="Calcium ATPase, transmembrane domain M"/>
    <property type="match status" value="1"/>
</dbReference>
<dbReference type="SUPFAM" id="SSF56784">
    <property type="entry name" value="HAD-like"/>
    <property type="match status" value="1"/>
</dbReference>
<dbReference type="PROSITE" id="PS00154">
    <property type="entry name" value="ATPASE_E1_E2"/>
    <property type="match status" value="1"/>
</dbReference>
<feature type="chain" id="PRO_0000350604" description="Probable copper-transporting P-type ATPase B">
    <location>
        <begin position="1"/>
        <end position="674"/>
    </location>
</feature>
<feature type="transmembrane region" description="Helical" evidence="2">
    <location>
        <begin position="32"/>
        <end position="52"/>
    </location>
</feature>
<feature type="transmembrane region" description="Helical" evidence="2">
    <location>
        <begin position="57"/>
        <end position="77"/>
    </location>
</feature>
<feature type="transmembrane region" description="Helical" evidence="2">
    <location>
        <begin position="95"/>
        <end position="115"/>
    </location>
</feature>
<feature type="transmembrane region" description="Helical" evidence="2">
    <location>
        <begin position="127"/>
        <end position="147"/>
    </location>
</feature>
<feature type="transmembrane region" description="Helical" evidence="2">
    <location>
        <begin position="284"/>
        <end position="304"/>
    </location>
</feature>
<feature type="transmembrane region" description="Helical" evidence="2">
    <location>
        <begin position="315"/>
        <end position="335"/>
    </location>
</feature>
<feature type="transmembrane region" description="Helical" evidence="2">
    <location>
        <begin position="623"/>
        <end position="645"/>
    </location>
</feature>
<feature type="transmembrane region" description="Helical" evidence="2">
    <location>
        <begin position="649"/>
        <end position="671"/>
    </location>
</feature>
<feature type="region of interest" description="Disordered" evidence="3">
    <location>
        <begin position="1"/>
        <end position="22"/>
    </location>
</feature>
<feature type="compositionally biased region" description="Basic and acidic residues" evidence="3">
    <location>
        <begin position="7"/>
        <end position="19"/>
    </location>
</feature>
<feature type="active site" description="4-aspartylphosphate intermediate" evidence="1">
    <location>
        <position position="367"/>
    </location>
</feature>
<feature type="binding site" evidence="1">
    <location>
        <position position="565"/>
    </location>
    <ligand>
        <name>Mg(2+)</name>
        <dbReference type="ChEBI" id="CHEBI:18420"/>
    </ligand>
</feature>
<feature type="binding site" evidence="1">
    <location>
        <position position="569"/>
    </location>
    <ligand>
        <name>Mg(2+)</name>
        <dbReference type="ChEBI" id="CHEBI:18420"/>
    </ligand>
</feature>
<organism>
    <name type="scientific">Staphylococcus aureus (strain USA300 / TCH1516)</name>
    <dbReference type="NCBI Taxonomy" id="451516"/>
    <lineage>
        <taxon>Bacteria</taxon>
        <taxon>Bacillati</taxon>
        <taxon>Bacillota</taxon>
        <taxon>Bacilli</taxon>
        <taxon>Bacillales</taxon>
        <taxon>Staphylococcaceae</taxon>
        <taxon>Staphylococcus</taxon>
    </lineage>
</organism>
<accession>A8YZ02</accession>
<comment type="function">
    <text evidence="1">Involved in copper transport.</text>
</comment>
<comment type="catalytic activity">
    <reaction>
        <text>Cu(+)(in) + ATP + H2O = Cu(+)(out) + ADP + phosphate + H(+)</text>
        <dbReference type="Rhea" id="RHEA:25792"/>
        <dbReference type="ChEBI" id="CHEBI:15377"/>
        <dbReference type="ChEBI" id="CHEBI:15378"/>
        <dbReference type="ChEBI" id="CHEBI:30616"/>
        <dbReference type="ChEBI" id="CHEBI:43474"/>
        <dbReference type="ChEBI" id="CHEBI:49552"/>
        <dbReference type="ChEBI" id="CHEBI:456216"/>
        <dbReference type="EC" id="7.2.2.8"/>
    </reaction>
</comment>
<comment type="subcellular location">
    <subcellularLocation>
        <location evidence="1">Cell membrane</location>
        <topology evidence="1">Multi-pass membrane protein</topology>
    </subcellularLocation>
</comment>
<comment type="similarity">
    <text evidence="4">Belongs to the cation transport ATPase (P-type) (TC 3.A.3) family. Type IB subfamily.</text>
</comment>
<gene>
    <name type="primary">copB</name>
    <name type="ordered locus">USA300HOU_0084</name>
</gene>
<keyword id="KW-0067">ATP-binding</keyword>
<keyword id="KW-1003">Cell membrane</keyword>
<keyword id="KW-0186">Copper</keyword>
<keyword id="KW-0187">Copper transport</keyword>
<keyword id="KW-0406">Ion transport</keyword>
<keyword id="KW-0460">Magnesium</keyword>
<keyword id="KW-0472">Membrane</keyword>
<keyword id="KW-0479">Metal-binding</keyword>
<keyword id="KW-0547">Nucleotide-binding</keyword>
<keyword id="KW-0597">Phosphoprotein</keyword>
<keyword id="KW-1278">Translocase</keyword>
<keyword id="KW-0812">Transmembrane</keyword>
<keyword id="KW-1133">Transmembrane helix</keyword>
<keyword id="KW-0813">Transport</keyword>